<accession>A4Y4J1</accession>
<dbReference type="EC" id="2.1.1.45" evidence="1"/>
<dbReference type="EMBL" id="CP000681">
    <property type="protein sequence ID" value="ABP74874.1"/>
    <property type="molecule type" value="Genomic_DNA"/>
</dbReference>
<dbReference type="SMR" id="A4Y4J1"/>
<dbReference type="STRING" id="319224.Sputcn32_1146"/>
<dbReference type="KEGG" id="spc:Sputcn32_1146"/>
<dbReference type="eggNOG" id="COG0207">
    <property type="taxonomic scope" value="Bacteria"/>
</dbReference>
<dbReference type="HOGENOM" id="CLU_021669_0_0_6"/>
<dbReference type="UniPathway" id="UPA00575"/>
<dbReference type="GO" id="GO:0005829">
    <property type="term" value="C:cytosol"/>
    <property type="evidence" value="ECO:0007669"/>
    <property type="project" value="TreeGrafter"/>
</dbReference>
<dbReference type="GO" id="GO:0004799">
    <property type="term" value="F:thymidylate synthase activity"/>
    <property type="evidence" value="ECO:0007669"/>
    <property type="project" value="UniProtKB-UniRule"/>
</dbReference>
<dbReference type="GO" id="GO:0006231">
    <property type="term" value="P:dTMP biosynthetic process"/>
    <property type="evidence" value="ECO:0007669"/>
    <property type="project" value="UniProtKB-UniRule"/>
</dbReference>
<dbReference type="GO" id="GO:0006235">
    <property type="term" value="P:dTTP biosynthetic process"/>
    <property type="evidence" value="ECO:0007669"/>
    <property type="project" value="UniProtKB-UniRule"/>
</dbReference>
<dbReference type="GO" id="GO:0032259">
    <property type="term" value="P:methylation"/>
    <property type="evidence" value="ECO:0007669"/>
    <property type="project" value="UniProtKB-KW"/>
</dbReference>
<dbReference type="CDD" id="cd00351">
    <property type="entry name" value="TS_Pyrimidine_HMase"/>
    <property type="match status" value="1"/>
</dbReference>
<dbReference type="FunFam" id="3.30.572.10:FF:000001">
    <property type="entry name" value="Thymidylate synthase"/>
    <property type="match status" value="1"/>
</dbReference>
<dbReference type="Gene3D" id="3.30.572.10">
    <property type="entry name" value="Thymidylate synthase/dCMP hydroxymethylase domain"/>
    <property type="match status" value="1"/>
</dbReference>
<dbReference type="HAMAP" id="MF_00008">
    <property type="entry name" value="Thymidy_synth_bact"/>
    <property type="match status" value="1"/>
</dbReference>
<dbReference type="InterPro" id="IPR045097">
    <property type="entry name" value="Thymidate_synth/dCMP_Mease"/>
</dbReference>
<dbReference type="InterPro" id="IPR023451">
    <property type="entry name" value="Thymidate_synth/dCMP_Mease_dom"/>
</dbReference>
<dbReference type="InterPro" id="IPR036926">
    <property type="entry name" value="Thymidate_synth/dCMP_Mease_sf"/>
</dbReference>
<dbReference type="InterPro" id="IPR000398">
    <property type="entry name" value="Thymidylate_synthase"/>
</dbReference>
<dbReference type="InterPro" id="IPR020940">
    <property type="entry name" value="Thymidylate_synthase_AS"/>
</dbReference>
<dbReference type="NCBIfam" id="NF002497">
    <property type="entry name" value="PRK01827.1-3"/>
    <property type="match status" value="1"/>
</dbReference>
<dbReference type="NCBIfam" id="NF002499">
    <property type="entry name" value="PRK01827.1-5"/>
    <property type="match status" value="1"/>
</dbReference>
<dbReference type="NCBIfam" id="TIGR03284">
    <property type="entry name" value="thym_sym"/>
    <property type="match status" value="2"/>
</dbReference>
<dbReference type="PANTHER" id="PTHR11548:SF9">
    <property type="entry name" value="THYMIDYLATE SYNTHASE"/>
    <property type="match status" value="1"/>
</dbReference>
<dbReference type="PANTHER" id="PTHR11548">
    <property type="entry name" value="THYMIDYLATE SYNTHASE 1"/>
    <property type="match status" value="1"/>
</dbReference>
<dbReference type="Pfam" id="PF00303">
    <property type="entry name" value="Thymidylat_synt"/>
    <property type="match status" value="1"/>
</dbReference>
<dbReference type="PRINTS" id="PR00108">
    <property type="entry name" value="THYMDSNTHASE"/>
</dbReference>
<dbReference type="SUPFAM" id="SSF55831">
    <property type="entry name" value="Thymidylate synthase/dCMP hydroxymethylase"/>
    <property type="match status" value="1"/>
</dbReference>
<dbReference type="PROSITE" id="PS00091">
    <property type="entry name" value="THYMIDYLATE_SYNTHASE"/>
    <property type="match status" value="1"/>
</dbReference>
<sequence>MQQYLDLMKHILAEGVDKSDRTGTGTRSVFGYQMRFDLSKGFPLVTTKKCHMRSIIHELLWFLKGETNIAYLRENKVSIWDEWADDNGDLGPVYGAQWRSWPTQSGDAIDQISQVIAQIKAQPDSRRLIVSAWNVGELDKMALAPCHAFFQFYVADGKLSCQLYQRSCDVFLGLPFNIASYALLTMMVAQQCDLALGDFVWTGGDTHLYSNHMEQTVLQLSREPKPLPLMTILRKPESIFDYQFEDFELTNYNPHPHIKAPVAV</sequence>
<keyword id="KW-0963">Cytoplasm</keyword>
<keyword id="KW-0489">Methyltransferase</keyword>
<keyword id="KW-0545">Nucleotide biosynthesis</keyword>
<keyword id="KW-0808">Transferase</keyword>
<protein>
    <recommendedName>
        <fullName evidence="1">Thymidylate synthase</fullName>
        <shortName evidence="1">TS</shortName>
        <shortName evidence="1">TSase</shortName>
        <ecNumber evidence="1">2.1.1.45</ecNumber>
    </recommendedName>
</protein>
<reference key="1">
    <citation type="submission" date="2007-04" db="EMBL/GenBank/DDBJ databases">
        <title>Complete sequence of Shewanella putrefaciens CN-32.</title>
        <authorList>
            <consortium name="US DOE Joint Genome Institute"/>
            <person name="Copeland A."/>
            <person name="Lucas S."/>
            <person name="Lapidus A."/>
            <person name="Barry K."/>
            <person name="Detter J.C."/>
            <person name="Glavina del Rio T."/>
            <person name="Hammon N."/>
            <person name="Israni S."/>
            <person name="Dalin E."/>
            <person name="Tice H."/>
            <person name="Pitluck S."/>
            <person name="Chain P."/>
            <person name="Malfatti S."/>
            <person name="Shin M."/>
            <person name="Vergez L."/>
            <person name="Schmutz J."/>
            <person name="Larimer F."/>
            <person name="Land M."/>
            <person name="Hauser L."/>
            <person name="Kyrpides N."/>
            <person name="Mikhailova N."/>
            <person name="Romine M.F."/>
            <person name="Fredrickson J."/>
            <person name="Tiedje J."/>
            <person name="Richardson P."/>
        </authorList>
    </citation>
    <scope>NUCLEOTIDE SEQUENCE [LARGE SCALE GENOMIC DNA]</scope>
    <source>
        <strain>CN-32 / ATCC BAA-453</strain>
    </source>
</reference>
<name>TYSY_SHEPC</name>
<proteinExistence type="inferred from homology"/>
<evidence type="ECO:0000255" key="1">
    <source>
        <dbReference type="HAMAP-Rule" id="MF_00008"/>
    </source>
</evidence>
<organism>
    <name type="scientific">Shewanella putrefaciens (strain CN-32 / ATCC BAA-453)</name>
    <dbReference type="NCBI Taxonomy" id="319224"/>
    <lineage>
        <taxon>Bacteria</taxon>
        <taxon>Pseudomonadati</taxon>
        <taxon>Pseudomonadota</taxon>
        <taxon>Gammaproteobacteria</taxon>
        <taxon>Alteromonadales</taxon>
        <taxon>Shewanellaceae</taxon>
        <taxon>Shewanella</taxon>
    </lineage>
</organism>
<feature type="chain" id="PRO_1000000673" description="Thymidylate synthase">
    <location>
        <begin position="1"/>
        <end position="264"/>
    </location>
</feature>
<feature type="active site" description="Nucleophile" evidence="1">
    <location>
        <position position="146"/>
    </location>
</feature>
<feature type="binding site" description="in other chain" evidence="1">
    <location>
        <position position="21"/>
    </location>
    <ligand>
        <name>dUMP</name>
        <dbReference type="ChEBI" id="CHEBI:246422"/>
        <note>ligand shared between dimeric partners</note>
    </ligand>
</feature>
<feature type="binding site" evidence="1">
    <location>
        <position position="51"/>
    </location>
    <ligand>
        <name>(6R)-5,10-methylene-5,6,7,8-tetrahydrofolate</name>
        <dbReference type="ChEBI" id="CHEBI:15636"/>
    </ligand>
</feature>
<feature type="binding site" evidence="1">
    <location>
        <begin position="126"/>
        <end position="127"/>
    </location>
    <ligand>
        <name>dUMP</name>
        <dbReference type="ChEBI" id="CHEBI:246422"/>
        <note>ligand shared between dimeric partners</note>
    </ligand>
</feature>
<feature type="binding site" description="in other chain" evidence="1">
    <location>
        <begin position="166"/>
        <end position="169"/>
    </location>
    <ligand>
        <name>dUMP</name>
        <dbReference type="ChEBI" id="CHEBI:246422"/>
        <note>ligand shared between dimeric partners</note>
    </ligand>
</feature>
<feature type="binding site" evidence="1">
    <location>
        <position position="169"/>
    </location>
    <ligand>
        <name>(6R)-5,10-methylene-5,6,7,8-tetrahydrofolate</name>
        <dbReference type="ChEBI" id="CHEBI:15636"/>
    </ligand>
</feature>
<feature type="binding site" description="in other chain" evidence="1">
    <location>
        <position position="177"/>
    </location>
    <ligand>
        <name>dUMP</name>
        <dbReference type="ChEBI" id="CHEBI:246422"/>
        <note>ligand shared between dimeric partners</note>
    </ligand>
</feature>
<feature type="binding site" description="in other chain" evidence="1">
    <location>
        <begin position="207"/>
        <end position="209"/>
    </location>
    <ligand>
        <name>dUMP</name>
        <dbReference type="ChEBI" id="CHEBI:246422"/>
        <note>ligand shared between dimeric partners</note>
    </ligand>
</feature>
<feature type="binding site" evidence="1">
    <location>
        <position position="263"/>
    </location>
    <ligand>
        <name>(6R)-5,10-methylene-5,6,7,8-tetrahydrofolate</name>
        <dbReference type="ChEBI" id="CHEBI:15636"/>
    </ligand>
</feature>
<comment type="function">
    <text evidence="1">Catalyzes the reductive methylation of 2'-deoxyuridine-5'-monophosphate (dUMP) to 2'-deoxythymidine-5'-monophosphate (dTMP) while utilizing 5,10-methylenetetrahydrofolate (mTHF) as the methyl donor and reductant in the reaction, yielding dihydrofolate (DHF) as a by-product. This enzymatic reaction provides an intracellular de novo source of dTMP, an essential precursor for DNA biosynthesis.</text>
</comment>
<comment type="catalytic activity">
    <reaction evidence="1">
        <text>dUMP + (6R)-5,10-methylene-5,6,7,8-tetrahydrofolate = 7,8-dihydrofolate + dTMP</text>
        <dbReference type="Rhea" id="RHEA:12104"/>
        <dbReference type="ChEBI" id="CHEBI:15636"/>
        <dbReference type="ChEBI" id="CHEBI:57451"/>
        <dbReference type="ChEBI" id="CHEBI:63528"/>
        <dbReference type="ChEBI" id="CHEBI:246422"/>
        <dbReference type="EC" id="2.1.1.45"/>
    </reaction>
</comment>
<comment type="pathway">
    <text evidence="1">Pyrimidine metabolism; dTTP biosynthesis.</text>
</comment>
<comment type="subunit">
    <text evidence="1">Homodimer.</text>
</comment>
<comment type="subcellular location">
    <subcellularLocation>
        <location evidence="1">Cytoplasm</location>
    </subcellularLocation>
</comment>
<comment type="similarity">
    <text evidence="1">Belongs to the thymidylate synthase family. Bacterial-type ThyA subfamily.</text>
</comment>
<gene>
    <name evidence="1" type="primary">thyA</name>
    <name type="ordered locus">Sputcn32_1146</name>
</gene>